<comment type="catalytic activity">
    <reaction evidence="1">
        <text>butanoate + ATP = butanoyl phosphate + ADP</text>
        <dbReference type="Rhea" id="RHEA:13585"/>
        <dbReference type="ChEBI" id="CHEBI:17968"/>
        <dbReference type="ChEBI" id="CHEBI:30616"/>
        <dbReference type="ChEBI" id="CHEBI:58079"/>
        <dbReference type="ChEBI" id="CHEBI:456216"/>
        <dbReference type="EC" id="2.7.2.7"/>
    </reaction>
</comment>
<comment type="subcellular location">
    <subcellularLocation>
        <location evidence="1">Cytoplasm</location>
    </subcellularLocation>
</comment>
<comment type="similarity">
    <text evidence="1">Belongs to the acetokinase family.</text>
</comment>
<gene>
    <name evidence="1" type="primary">buk</name>
    <name type="ordered locus">COPRO5265_0782</name>
</gene>
<evidence type="ECO:0000255" key="1">
    <source>
        <dbReference type="HAMAP-Rule" id="MF_00542"/>
    </source>
</evidence>
<accession>B5Y8N2</accession>
<name>BUK_COPPD</name>
<organism>
    <name type="scientific">Coprothermobacter proteolyticus (strain ATCC 35245 / DSM 5265 / OCM 4 / BT)</name>
    <dbReference type="NCBI Taxonomy" id="309798"/>
    <lineage>
        <taxon>Bacteria</taxon>
        <taxon>Pseudomonadati</taxon>
        <taxon>Coprothermobacterota</taxon>
        <taxon>Coprothermobacteria</taxon>
        <taxon>Coprothermobacterales</taxon>
        <taxon>Coprothermobacteraceae</taxon>
        <taxon>Coprothermobacter</taxon>
    </lineage>
</organism>
<feature type="chain" id="PRO_1000128904" description="Probable butyrate kinase">
    <location>
        <begin position="1"/>
        <end position="356"/>
    </location>
</feature>
<keyword id="KW-0067">ATP-binding</keyword>
<keyword id="KW-0963">Cytoplasm</keyword>
<keyword id="KW-0418">Kinase</keyword>
<keyword id="KW-0547">Nucleotide-binding</keyword>
<keyword id="KW-1185">Reference proteome</keyword>
<keyword id="KW-0808">Transferase</keyword>
<proteinExistence type="inferred from homology"/>
<reference key="1">
    <citation type="submission" date="2008-08" db="EMBL/GenBank/DDBJ databases">
        <title>The complete genome sequence of Coprothermobacter proteolyticus strain ATCC 5245 / DSM 5265 / BT.</title>
        <authorList>
            <person name="Dodson R.J."/>
            <person name="Durkin A.S."/>
            <person name="Wu M."/>
            <person name="Eisen J."/>
            <person name="Sutton G."/>
        </authorList>
    </citation>
    <scope>NUCLEOTIDE SEQUENCE [LARGE SCALE GENOMIC DNA]</scope>
    <source>
        <strain>ATCC 35245 / DSM 5265 / OCM 4 / BT</strain>
    </source>
</reference>
<sequence length="356" mass="38667">MGFQILTINPGSTSTKVAWFDDDKLVWKDSVEHDAVTLSQFPSIAAQFELRASEVEKAVEKHGSDLNTLDAVVGRGGLLRPISSGVYSVNETMLKELIDARYGEHASNLGAPIAHAIASKVGCPAFIVDPVVVDEMDDISRLSGWPELPRKSIFHALNQKAVARRVARDFFSVPYEQLNLIVAHLGGGISIGAHKKGRVVDVNNALGGEGPMSPERAGTLPIMKLADYLYEHKPDRKEFSKKLVGKGGWVAHLGTNSGKDLEERVKNGDEHAILILKATGYQISKWIAQMAVALAGEVDGIIITGGLAYIPELVDFIQERVLWIAPVFVVPGEDEMLALAEGALRVLRGQEEAKTY</sequence>
<dbReference type="EC" id="2.7.2.7" evidence="1"/>
<dbReference type="EMBL" id="CP001145">
    <property type="protein sequence ID" value="ACI18124.1"/>
    <property type="molecule type" value="Genomic_DNA"/>
</dbReference>
<dbReference type="RefSeq" id="WP_012544774.1">
    <property type="nucleotide sequence ID" value="NC_011295.1"/>
</dbReference>
<dbReference type="SMR" id="B5Y8N2"/>
<dbReference type="STRING" id="309798.COPRO5265_0782"/>
<dbReference type="KEGG" id="cpo:COPRO5265_0782"/>
<dbReference type="eggNOG" id="COG3426">
    <property type="taxonomic scope" value="Bacteria"/>
</dbReference>
<dbReference type="HOGENOM" id="CLU_048716_0_0_9"/>
<dbReference type="OrthoDB" id="9771859at2"/>
<dbReference type="Proteomes" id="UP000001732">
    <property type="component" value="Chromosome"/>
</dbReference>
<dbReference type="GO" id="GO:0005737">
    <property type="term" value="C:cytoplasm"/>
    <property type="evidence" value="ECO:0007669"/>
    <property type="project" value="UniProtKB-SubCell"/>
</dbReference>
<dbReference type="GO" id="GO:0008776">
    <property type="term" value="F:acetate kinase activity"/>
    <property type="evidence" value="ECO:0007669"/>
    <property type="project" value="TreeGrafter"/>
</dbReference>
<dbReference type="GO" id="GO:0005524">
    <property type="term" value="F:ATP binding"/>
    <property type="evidence" value="ECO:0007669"/>
    <property type="project" value="UniProtKB-KW"/>
</dbReference>
<dbReference type="GO" id="GO:0047761">
    <property type="term" value="F:butyrate kinase activity"/>
    <property type="evidence" value="ECO:0007669"/>
    <property type="project" value="UniProtKB-UniRule"/>
</dbReference>
<dbReference type="GO" id="GO:0006083">
    <property type="term" value="P:acetate metabolic process"/>
    <property type="evidence" value="ECO:0007669"/>
    <property type="project" value="TreeGrafter"/>
</dbReference>
<dbReference type="CDD" id="cd24011">
    <property type="entry name" value="ASKHA_NBD_BK"/>
    <property type="match status" value="1"/>
</dbReference>
<dbReference type="Gene3D" id="3.30.420.40">
    <property type="match status" value="2"/>
</dbReference>
<dbReference type="HAMAP" id="MF_00542">
    <property type="entry name" value="Butyrate_kinase"/>
    <property type="match status" value="1"/>
</dbReference>
<dbReference type="InterPro" id="IPR000890">
    <property type="entry name" value="Aliphatic_acid_kin_short-chain"/>
</dbReference>
<dbReference type="InterPro" id="IPR023865">
    <property type="entry name" value="Aliphatic_acid_kinase_CS"/>
</dbReference>
<dbReference type="InterPro" id="IPR043129">
    <property type="entry name" value="ATPase_NBD"/>
</dbReference>
<dbReference type="InterPro" id="IPR011245">
    <property type="entry name" value="Butyrate_kin"/>
</dbReference>
<dbReference type="NCBIfam" id="TIGR02707">
    <property type="entry name" value="butyr_kinase"/>
    <property type="match status" value="1"/>
</dbReference>
<dbReference type="NCBIfam" id="NF002834">
    <property type="entry name" value="PRK03011.1-5"/>
    <property type="match status" value="1"/>
</dbReference>
<dbReference type="PANTHER" id="PTHR21060">
    <property type="entry name" value="ACETATE KINASE"/>
    <property type="match status" value="1"/>
</dbReference>
<dbReference type="PANTHER" id="PTHR21060:SF3">
    <property type="entry name" value="BUTYRATE KINASE 2-RELATED"/>
    <property type="match status" value="1"/>
</dbReference>
<dbReference type="Pfam" id="PF00871">
    <property type="entry name" value="Acetate_kinase"/>
    <property type="match status" value="1"/>
</dbReference>
<dbReference type="PIRSF" id="PIRSF036458">
    <property type="entry name" value="Butyrate_kin"/>
    <property type="match status" value="1"/>
</dbReference>
<dbReference type="PRINTS" id="PR00471">
    <property type="entry name" value="ACETATEKNASE"/>
</dbReference>
<dbReference type="SUPFAM" id="SSF53067">
    <property type="entry name" value="Actin-like ATPase domain"/>
    <property type="match status" value="2"/>
</dbReference>
<dbReference type="PROSITE" id="PS01075">
    <property type="entry name" value="ACETATE_KINASE_1"/>
    <property type="match status" value="1"/>
</dbReference>
<dbReference type="PROSITE" id="PS01076">
    <property type="entry name" value="ACETATE_KINASE_2"/>
    <property type="match status" value="1"/>
</dbReference>
<protein>
    <recommendedName>
        <fullName evidence="1">Probable butyrate kinase</fullName>
        <shortName evidence="1">BK</shortName>
        <ecNumber evidence="1">2.7.2.7</ecNumber>
    </recommendedName>
    <alternativeName>
        <fullName evidence="1">Branched-chain carboxylic acid kinase</fullName>
    </alternativeName>
</protein>